<name>NUSB_STRT1</name>
<feature type="chain" id="PRO_0000265609" description="Transcription antitermination protein NusB">
    <location>
        <begin position="1"/>
        <end position="144"/>
    </location>
</feature>
<comment type="function">
    <text evidence="1">Involved in transcription antitermination. Required for transcription of ribosomal RNA (rRNA) genes. Binds specifically to the boxA antiterminator sequence of the ribosomal RNA (rrn) operons.</text>
</comment>
<comment type="similarity">
    <text evidence="1">Belongs to the NusB family.</text>
</comment>
<sequence length="144" mass="16541">MTNIFKDSRRDLRERAFQTLFALEFGGEALDQAYFAYTYDKPIDEETEVDLPSFLLSLVTGVREELPQLDSQIEEKLKEGWSLSRLIMTDRTLLRLGLYEITSFEETPGRVAINEIIEIAKKYSDKTSAKFINGVLSQFVTDEA</sequence>
<keyword id="KW-0694">RNA-binding</keyword>
<keyword id="KW-0804">Transcription</keyword>
<keyword id="KW-0889">Transcription antitermination</keyword>
<keyword id="KW-0805">Transcription regulation</keyword>
<accession>Q5LY62</accession>
<organism>
    <name type="scientific">Streptococcus thermophilus (strain CNRZ 1066)</name>
    <dbReference type="NCBI Taxonomy" id="299768"/>
    <lineage>
        <taxon>Bacteria</taxon>
        <taxon>Bacillati</taxon>
        <taxon>Bacillota</taxon>
        <taxon>Bacilli</taxon>
        <taxon>Lactobacillales</taxon>
        <taxon>Streptococcaceae</taxon>
        <taxon>Streptococcus</taxon>
    </lineage>
</organism>
<evidence type="ECO:0000255" key="1">
    <source>
        <dbReference type="HAMAP-Rule" id="MF_00073"/>
    </source>
</evidence>
<gene>
    <name evidence="1" type="primary">nusB</name>
    <name type="ordered locus">str1738</name>
</gene>
<dbReference type="EMBL" id="CP000024">
    <property type="protein sequence ID" value="AAV63256.1"/>
    <property type="molecule type" value="Genomic_DNA"/>
</dbReference>
<dbReference type="RefSeq" id="WP_002951890.1">
    <property type="nucleotide sequence ID" value="NC_006449.1"/>
</dbReference>
<dbReference type="SMR" id="Q5LY62"/>
<dbReference type="GeneID" id="66899474"/>
<dbReference type="KEGG" id="stc:str1738"/>
<dbReference type="HOGENOM" id="CLU_087843_3_2_9"/>
<dbReference type="GO" id="GO:0005829">
    <property type="term" value="C:cytosol"/>
    <property type="evidence" value="ECO:0007669"/>
    <property type="project" value="TreeGrafter"/>
</dbReference>
<dbReference type="GO" id="GO:0003723">
    <property type="term" value="F:RNA binding"/>
    <property type="evidence" value="ECO:0007669"/>
    <property type="project" value="UniProtKB-UniRule"/>
</dbReference>
<dbReference type="GO" id="GO:0006353">
    <property type="term" value="P:DNA-templated transcription termination"/>
    <property type="evidence" value="ECO:0007669"/>
    <property type="project" value="UniProtKB-UniRule"/>
</dbReference>
<dbReference type="GO" id="GO:0031564">
    <property type="term" value="P:transcription antitermination"/>
    <property type="evidence" value="ECO:0007669"/>
    <property type="project" value="UniProtKB-KW"/>
</dbReference>
<dbReference type="Gene3D" id="1.10.940.10">
    <property type="entry name" value="NusB-like"/>
    <property type="match status" value="1"/>
</dbReference>
<dbReference type="HAMAP" id="MF_00073">
    <property type="entry name" value="NusB"/>
    <property type="match status" value="1"/>
</dbReference>
<dbReference type="InterPro" id="IPR035926">
    <property type="entry name" value="NusB-like_sf"/>
</dbReference>
<dbReference type="InterPro" id="IPR011605">
    <property type="entry name" value="NusB_fam"/>
</dbReference>
<dbReference type="InterPro" id="IPR006027">
    <property type="entry name" value="NusB_RsmB_TIM44"/>
</dbReference>
<dbReference type="NCBIfam" id="TIGR01951">
    <property type="entry name" value="nusB"/>
    <property type="match status" value="1"/>
</dbReference>
<dbReference type="NCBIfam" id="NF001223">
    <property type="entry name" value="PRK00202.1-1"/>
    <property type="match status" value="1"/>
</dbReference>
<dbReference type="PANTHER" id="PTHR11078:SF3">
    <property type="entry name" value="ANTITERMINATION NUSB DOMAIN-CONTAINING PROTEIN"/>
    <property type="match status" value="1"/>
</dbReference>
<dbReference type="PANTHER" id="PTHR11078">
    <property type="entry name" value="N UTILIZATION SUBSTANCE PROTEIN B-RELATED"/>
    <property type="match status" value="1"/>
</dbReference>
<dbReference type="Pfam" id="PF01029">
    <property type="entry name" value="NusB"/>
    <property type="match status" value="1"/>
</dbReference>
<dbReference type="SUPFAM" id="SSF48013">
    <property type="entry name" value="NusB-like"/>
    <property type="match status" value="1"/>
</dbReference>
<proteinExistence type="inferred from homology"/>
<reference key="1">
    <citation type="journal article" date="2004" name="Nat. Biotechnol.">
        <title>Complete sequence and comparative genome analysis of the dairy bacterium Streptococcus thermophilus.</title>
        <authorList>
            <person name="Bolotin A."/>
            <person name="Quinquis B."/>
            <person name="Renault P."/>
            <person name="Sorokin A."/>
            <person name="Ehrlich S.D."/>
            <person name="Kulakauskas S."/>
            <person name="Lapidus A."/>
            <person name="Goltsman E."/>
            <person name="Mazur M."/>
            <person name="Pusch G.D."/>
            <person name="Fonstein M."/>
            <person name="Overbeek R."/>
            <person name="Kyprides N."/>
            <person name="Purnelle B."/>
            <person name="Prozzi D."/>
            <person name="Ngui K."/>
            <person name="Masuy D."/>
            <person name="Hancy F."/>
            <person name="Burteau S."/>
            <person name="Boutry M."/>
            <person name="Delcour J."/>
            <person name="Goffeau A."/>
            <person name="Hols P."/>
        </authorList>
    </citation>
    <scope>NUCLEOTIDE SEQUENCE [LARGE SCALE GENOMIC DNA]</scope>
    <source>
        <strain>CNRZ 1066</strain>
    </source>
</reference>
<protein>
    <recommendedName>
        <fullName evidence="1">Transcription antitermination protein NusB</fullName>
    </recommendedName>
    <alternativeName>
        <fullName evidence="1">Antitermination factor NusB</fullName>
    </alternativeName>
</protein>